<keyword id="KW-0997">Cell inner membrane</keyword>
<keyword id="KW-1003">Cell membrane</keyword>
<keyword id="KW-0472">Membrane</keyword>
<keyword id="KW-0812">Transmembrane</keyword>
<keyword id="KW-1133">Transmembrane helix</keyword>
<gene>
    <name evidence="1" type="primary">ycjF</name>
    <name type="ordered locus">SFV_1338</name>
</gene>
<accession>Q0T579</accession>
<evidence type="ECO:0000255" key="1">
    <source>
        <dbReference type="HAMAP-Rule" id="MF_01085"/>
    </source>
</evidence>
<dbReference type="EMBL" id="CP000266">
    <property type="protein sequence ID" value="ABF03536.1"/>
    <property type="molecule type" value="Genomic_DNA"/>
</dbReference>
<dbReference type="RefSeq" id="WP_000138745.1">
    <property type="nucleotide sequence ID" value="NC_008258.1"/>
</dbReference>
<dbReference type="SMR" id="Q0T579"/>
<dbReference type="KEGG" id="sfv:SFV_1338"/>
<dbReference type="HOGENOM" id="CLU_057693_2_0_6"/>
<dbReference type="Proteomes" id="UP000000659">
    <property type="component" value="Chromosome"/>
</dbReference>
<dbReference type="GO" id="GO:0005886">
    <property type="term" value="C:plasma membrane"/>
    <property type="evidence" value="ECO:0007669"/>
    <property type="project" value="UniProtKB-SubCell"/>
</dbReference>
<dbReference type="HAMAP" id="MF_01085">
    <property type="entry name" value="UPF0283"/>
    <property type="match status" value="1"/>
</dbReference>
<dbReference type="InterPro" id="IPR021147">
    <property type="entry name" value="DUF697"/>
</dbReference>
<dbReference type="InterPro" id="IPR006507">
    <property type="entry name" value="UPF0283"/>
</dbReference>
<dbReference type="NCBIfam" id="TIGR01620">
    <property type="entry name" value="hyp_HI0043"/>
    <property type="match status" value="1"/>
</dbReference>
<dbReference type="PANTHER" id="PTHR39342">
    <property type="entry name" value="UPF0283 MEMBRANE PROTEIN YCJF"/>
    <property type="match status" value="1"/>
</dbReference>
<dbReference type="PANTHER" id="PTHR39342:SF1">
    <property type="entry name" value="UPF0283 MEMBRANE PROTEIN YCJF"/>
    <property type="match status" value="1"/>
</dbReference>
<dbReference type="Pfam" id="PF05128">
    <property type="entry name" value="DUF697"/>
    <property type="match status" value="1"/>
</dbReference>
<reference key="1">
    <citation type="journal article" date="2006" name="BMC Genomics">
        <title>Complete genome sequence of Shigella flexneri 5b and comparison with Shigella flexneri 2a.</title>
        <authorList>
            <person name="Nie H."/>
            <person name="Yang F."/>
            <person name="Zhang X."/>
            <person name="Yang J."/>
            <person name="Chen L."/>
            <person name="Wang J."/>
            <person name="Xiong Z."/>
            <person name="Peng J."/>
            <person name="Sun L."/>
            <person name="Dong J."/>
            <person name="Xue Y."/>
            <person name="Xu X."/>
            <person name="Chen S."/>
            <person name="Yao Z."/>
            <person name="Shen Y."/>
            <person name="Jin Q."/>
        </authorList>
    </citation>
    <scope>NUCLEOTIDE SEQUENCE [LARGE SCALE GENOMIC DNA]</scope>
    <source>
        <strain>8401</strain>
    </source>
</reference>
<name>YCJF_SHIF8</name>
<comment type="subcellular location">
    <subcellularLocation>
        <location evidence="1">Cell inner membrane</location>
        <topology evidence="1">Multi-pass membrane protein</topology>
    </subcellularLocation>
</comment>
<comment type="similarity">
    <text evidence="1">Belongs to the UPF0283 family.</text>
</comment>
<feature type="chain" id="PRO_1000064852" description="UPF0283 membrane protein YcjF">
    <location>
        <begin position="1"/>
        <end position="353"/>
    </location>
</feature>
<feature type="transmembrane region" description="Helical" evidence="1">
    <location>
        <begin position="70"/>
        <end position="90"/>
    </location>
</feature>
<feature type="transmembrane region" description="Helical" evidence="1">
    <location>
        <begin position="100"/>
        <end position="120"/>
    </location>
</feature>
<feature type="transmembrane region" description="Helical" evidence="1">
    <location>
        <begin position="213"/>
        <end position="233"/>
    </location>
</feature>
<organism>
    <name type="scientific">Shigella flexneri serotype 5b (strain 8401)</name>
    <dbReference type="NCBI Taxonomy" id="373384"/>
    <lineage>
        <taxon>Bacteria</taxon>
        <taxon>Pseudomonadati</taxon>
        <taxon>Pseudomonadota</taxon>
        <taxon>Gammaproteobacteria</taxon>
        <taxon>Enterobacterales</taxon>
        <taxon>Enterobacteriaceae</taxon>
        <taxon>Shigella</taxon>
    </lineage>
</organism>
<proteinExistence type="inferred from homology"/>
<protein>
    <recommendedName>
        <fullName evidence="1">UPF0283 membrane protein YcjF</fullName>
    </recommendedName>
</protein>
<sequence>MTEPLKPRIDFDGPLEVEQNPKFRAQQTFDENQAQNFAPATLDEAQEEEGQVEAVMDAALRPKRSLWRKMVMGGLALFGASVVGQGIQWTMNAWQTQDWVALGGCAAGALIIGAGVGSVVTEWRRLWRLRQRAHERDEARDLLHSHGTGKGRAFCEKLAQQAGIDQSHPALQRWYASIHETQNDREVVSLYAHLVQPVLDAQARREISRSAAESTLMIAVSPLALVDMAFIAWRNLRLINRIATLYGIELGYYSRLRLFKLVLLNIAFAGASELVREVGMDWMSQDLAARLSTRAAQGIGAGLLTVRLGIKAMELCRPLPWIDDDKPRLGDFRRQLIGQVKETLQKGKTPSEK</sequence>